<reference key="1">
    <citation type="journal article" date="2009" name="J. Bacteriol.">
        <title>Genome sequences of three Agrobacterium biovars help elucidate the evolution of multichromosome genomes in bacteria.</title>
        <authorList>
            <person name="Slater S.C."/>
            <person name="Goldman B.S."/>
            <person name="Goodner B."/>
            <person name="Setubal J.C."/>
            <person name="Farrand S.K."/>
            <person name="Nester E.W."/>
            <person name="Burr T.J."/>
            <person name="Banta L."/>
            <person name="Dickerman A.W."/>
            <person name="Paulsen I."/>
            <person name="Otten L."/>
            <person name="Suen G."/>
            <person name="Welch R."/>
            <person name="Almeida N.F."/>
            <person name="Arnold F."/>
            <person name="Burton O.T."/>
            <person name="Du Z."/>
            <person name="Ewing A."/>
            <person name="Godsy E."/>
            <person name="Heisel S."/>
            <person name="Houmiel K.L."/>
            <person name="Jhaveri J."/>
            <person name="Lu J."/>
            <person name="Miller N.M."/>
            <person name="Norton S."/>
            <person name="Chen Q."/>
            <person name="Phoolcharoen W."/>
            <person name="Ohlin V."/>
            <person name="Ondrusek D."/>
            <person name="Pride N."/>
            <person name="Stricklin S.L."/>
            <person name="Sun J."/>
            <person name="Wheeler C."/>
            <person name="Wilson L."/>
            <person name="Zhu H."/>
            <person name="Wood D.W."/>
        </authorList>
    </citation>
    <scope>NUCLEOTIDE SEQUENCE [LARGE SCALE GENOMIC DNA]</scope>
    <source>
        <strain>K84 / ATCC BAA-868</strain>
    </source>
</reference>
<dbReference type="EMBL" id="CP000628">
    <property type="protein sequence ID" value="ACM26304.1"/>
    <property type="molecule type" value="Genomic_DNA"/>
</dbReference>
<dbReference type="RefSeq" id="WP_007690793.1">
    <property type="nucleotide sequence ID" value="NC_011985.1"/>
</dbReference>
<dbReference type="SMR" id="B9JDV3"/>
<dbReference type="STRING" id="311403.Arad_2007"/>
<dbReference type="GeneID" id="86848192"/>
<dbReference type="KEGG" id="ara:Arad_2007"/>
<dbReference type="eggNOG" id="COG0203">
    <property type="taxonomic scope" value="Bacteria"/>
</dbReference>
<dbReference type="HOGENOM" id="CLU_074407_2_0_5"/>
<dbReference type="Proteomes" id="UP000001600">
    <property type="component" value="Chromosome 1"/>
</dbReference>
<dbReference type="GO" id="GO:0022625">
    <property type="term" value="C:cytosolic large ribosomal subunit"/>
    <property type="evidence" value="ECO:0007669"/>
    <property type="project" value="TreeGrafter"/>
</dbReference>
<dbReference type="GO" id="GO:0003735">
    <property type="term" value="F:structural constituent of ribosome"/>
    <property type="evidence" value="ECO:0007669"/>
    <property type="project" value="InterPro"/>
</dbReference>
<dbReference type="GO" id="GO:0006412">
    <property type="term" value="P:translation"/>
    <property type="evidence" value="ECO:0007669"/>
    <property type="project" value="UniProtKB-UniRule"/>
</dbReference>
<dbReference type="FunFam" id="3.90.1030.10:FF:000001">
    <property type="entry name" value="50S ribosomal protein L17"/>
    <property type="match status" value="1"/>
</dbReference>
<dbReference type="Gene3D" id="3.90.1030.10">
    <property type="entry name" value="Ribosomal protein L17"/>
    <property type="match status" value="1"/>
</dbReference>
<dbReference type="HAMAP" id="MF_01368">
    <property type="entry name" value="Ribosomal_bL17"/>
    <property type="match status" value="1"/>
</dbReference>
<dbReference type="InterPro" id="IPR000456">
    <property type="entry name" value="Ribosomal_bL17"/>
</dbReference>
<dbReference type="InterPro" id="IPR047859">
    <property type="entry name" value="Ribosomal_bL17_CS"/>
</dbReference>
<dbReference type="InterPro" id="IPR036373">
    <property type="entry name" value="Ribosomal_bL17_sf"/>
</dbReference>
<dbReference type="NCBIfam" id="TIGR00059">
    <property type="entry name" value="L17"/>
    <property type="match status" value="1"/>
</dbReference>
<dbReference type="PANTHER" id="PTHR14413:SF16">
    <property type="entry name" value="LARGE RIBOSOMAL SUBUNIT PROTEIN BL17M"/>
    <property type="match status" value="1"/>
</dbReference>
<dbReference type="PANTHER" id="PTHR14413">
    <property type="entry name" value="RIBOSOMAL PROTEIN L17"/>
    <property type="match status" value="1"/>
</dbReference>
<dbReference type="Pfam" id="PF01196">
    <property type="entry name" value="Ribosomal_L17"/>
    <property type="match status" value="1"/>
</dbReference>
<dbReference type="SUPFAM" id="SSF64263">
    <property type="entry name" value="Prokaryotic ribosomal protein L17"/>
    <property type="match status" value="1"/>
</dbReference>
<dbReference type="PROSITE" id="PS01167">
    <property type="entry name" value="RIBOSOMAL_L17"/>
    <property type="match status" value="1"/>
</dbReference>
<keyword id="KW-0687">Ribonucleoprotein</keyword>
<keyword id="KW-0689">Ribosomal protein</keyword>
<evidence type="ECO:0000255" key="1">
    <source>
        <dbReference type="HAMAP-Rule" id="MF_01368"/>
    </source>
</evidence>
<evidence type="ECO:0000305" key="2"/>
<accession>B9JDV3</accession>
<proteinExistence type="inferred from homology"/>
<gene>
    <name evidence="1" type="primary">rplQ</name>
    <name type="ordered locus">Arad_2007</name>
</gene>
<comment type="subunit">
    <text evidence="1">Part of the 50S ribosomal subunit. Contacts protein L32.</text>
</comment>
<comment type="similarity">
    <text evidence="1">Belongs to the bacterial ribosomal protein bL17 family.</text>
</comment>
<name>RL17_RHIR8</name>
<protein>
    <recommendedName>
        <fullName evidence="1">Large ribosomal subunit protein bL17</fullName>
    </recommendedName>
    <alternativeName>
        <fullName evidence="2">50S ribosomal protein L17</fullName>
    </alternativeName>
</protein>
<organism>
    <name type="scientific">Rhizobium rhizogenes (strain K84 / ATCC BAA-868)</name>
    <name type="common">Agrobacterium radiobacter</name>
    <dbReference type="NCBI Taxonomy" id="311403"/>
    <lineage>
        <taxon>Bacteria</taxon>
        <taxon>Pseudomonadati</taxon>
        <taxon>Pseudomonadota</taxon>
        <taxon>Alphaproteobacteria</taxon>
        <taxon>Hyphomicrobiales</taxon>
        <taxon>Rhizobiaceae</taxon>
        <taxon>Rhizobium/Agrobacterium group</taxon>
        <taxon>Rhizobium</taxon>
    </lineage>
</organism>
<sequence>MRHGKAGRKLNRTASHRKAMFANMAASLITHEQIVTTLPKAKEIRPIVEKLVTLGKRGDLHARRQAISQIRDAVVVAKLFDAIATRYATRNGGYLRIMKAGFRQGDNAALAVVEFVDRDTSAKGAADKARVAAEEEAAAA</sequence>
<feature type="chain" id="PRO_1000183990" description="Large ribosomal subunit protein bL17">
    <location>
        <begin position="1"/>
        <end position="140"/>
    </location>
</feature>